<name>AN20B_HUMAN</name>
<proteinExistence type="evidence at transcript level"/>
<comment type="alternative products">
    <event type="alternative splicing"/>
    <isoform>
        <id>Q5CZ79-1</id>
        <name>1</name>
        <sequence type="displayed"/>
    </isoform>
    <isoform>
        <id>Q5CZ79-2</id>
        <name>2</name>
        <sequence type="described" ref="VSP_032809 VSP_032810"/>
    </isoform>
</comment>
<comment type="sequence caution" evidence="4">
    <conflict type="erroneous initiation">
        <sequence resource="EMBL-CDS" id="CAI56787"/>
    </conflict>
    <text>Extended N-terminus.</text>
</comment>
<gene>
    <name type="primary">ANKRD20A8P</name>
    <name type="synonym">ANKRD20B</name>
</gene>
<dbReference type="EMBL" id="AC073464">
    <property type="status" value="NOT_ANNOTATED_CDS"/>
    <property type="molecule type" value="Genomic_DNA"/>
</dbReference>
<dbReference type="EMBL" id="AC097374">
    <property type="status" value="NOT_ANNOTATED_CDS"/>
    <property type="molecule type" value="Genomic_DNA"/>
</dbReference>
<dbReference type="EMBL" id="CR936649">
    <property type="protein sequence ID" value="CAI56787.1"/>
    <property type="status" value="ALT_INIT"/>
    <property type="molecule type" value="mRNA"/>
</dbReference>
<dbReference type="SMR" id="Q5CZ79"/>
<dbReference type="iPTMnet" id="Q5CZ79"/>
<dbReference type="PhosphoSitePlus" id="Q5CZ79"/>
<dbReference type="BioMuta" id="ANKRD20A8P"/>
<dbReference type="DMDM" id="182627628"/>
<dbReference type="jPOST" id="Q5CZ79"/>
<dbReference type="MassIVE" id="Q5CZ79"/>
<dbReference type="PeptideAtlas" id="Q5CZ79"/>
<dbReference type="ProteomicsDB" id="62729">
    <molecule id="Q5CZ79-1"/>
</dbReference>
<dbReference type="ProteomicsDB" id="62730">
    <molecule id="Q5CZ79-2"/>
</dbReference>
<dbReference type="AGR" id="HGNC:23666"/>
<dbReference type="GeneCards" id="ANKRD20A8P"/>
<dbReference type="HGNC" id="HGNC:23666">
    <property type="gene designation" value="ANKRD20A8P"/>
</dbReference>
<dbReference type="neXtProt" id="NX_Q5CZ79"/>
<dbReference type="InParanoid" id="Q5CZ79"/>
<dbReference type="PAN-GO" id="Q5CZ79">
    <property type="GO annotations" value="0 GO annotations based on evolutionary models"/>
</dbReference>
<dbReference type="PhylomeDB" id="Q5CZ79"/>
<dbReference type="ChiTaRS" id="ANKRD20A8P">
    <property type="organism name" value="human"/>
</dbReference>
<dbReference type="Pharos" id="Q5CZ79">
    <property type="development level" value="Tdark"/>
</dbReference>
<dbReference type="PRO" id="PR:Q5CZ79"/>
<dbReference type="Proteomes" id="UP000005640">
    <property type="component" value="Unplaced"/>
</dbReference>
<dbReference type="RNAct" id="Q5CZ79">
    <property type="molecule type" value="protein"/>
</dbReference>
<dbReference type="FunFam" id="1.25.40.20:FF:000208">
    <property type="entry name" value="Ankyrin repeat domain-containing protein 26"/>
    <property type="match status" value="1"/>
</dbReference>
<dbReference type="Gene3D" id="1.25.40.20">
    <property type="entry name" value="Ankyrin repeat-containing domain"/>
    <property type="match status" value="2"/>
</dbReference>
<dbReference type="InterPro" id="IPR050657">
    <property type="entry name" value="Ankyrin_repeat_domain"/>
</dbReference>
<dbReference type="InterPro" id="IPR002110">
    <property type="entry name" value="Ankyrin_rpt"/>
</dbReference>
<dbReference type="InterPro" id="IPR036770">
    <property type="entry name" value="Ankyrin_rpt-contain_sf"/>
</dbReference>
<dbReference type="InterPro" id="IPR039497">
    <property type="entry name" value="CC144C-like_CC_dom"/>
</dbReference>
<dbReference type="PANTHER" id="PTHR24147">
    <property type="entry name" value="ANKYRIN REPEAT DOMAIN 36-RELATED"/>
    <property type="match status" value="1"/>
</dbReference>
<dbReference type="PANTHER" id="PTHR24147:SF1">
    <property type="entry name" value="ANKYRIN REPEAT DOMAIN-CONTAINING PROTEIN 20A1-RELATED"/>
    <property type="match status" value="1"/>
</dbReference>
<dbReference type="Pfam" id="PF00023">
    <property type="entry name" value="Ank"/>
    <property type="match status" value="3"/>
</dbReference>
<dbReference type="Pfam" id="PF12796">
    <property type="entry name" value="Ank_2"/>
    <property type="match status" value="1"/>
</dbReference>
<dbReference type="Pfam" id="PF14915">
    <property type="entry name" value="CCDC144C"/>
    <property type="match status" value="2"/>
</dbReference>
<dbReference type="SMART" id="SM00248">
    <property type="entry name" value="ANK"/>
    <property type="match status" value="6"/>
</dbReference>
<dbReference type="SUPFAM" id="SSF48403">
    <property type="entry name" value="Ankyrin repeat"/>
    <property type="match status" value="1"/>
</dbReference>
<dbReference type="PROSITE" id="PS50297">
    <property type="entry name" value="ANK_REP_REGION"/>
    <property type="match status" value="1"/>
</dbReference>
<dbReference type="PROSITE" id="PS50088">
    <property type="entry name" value="ANK_REPEAT"/>
    <property type="match status" value="4"/>
</dbReference>
<feature type="chain" id="PRO_0000328835" description="Ankyrin repeat domain-containing protein 20B">
    <location>
        <begin position="1"/>
        <end position="823"/>
    </location>
</feature>
<feature type="repeat" description="ANK 1">
    <location>
        <begin position="32"/>
        <end position="65"/>
    </location>
</feature>
<feature type="repeat" description="ANK 2">
    <location>
        <begin position="66"/>
        <end position="95"/>
    </location>
</feature>
<feature type="repeat" description="ANK 3">
    <location>
        <begin position="99"/>
        <end position="128"/>
    </location>
</feature>
<feature type="repeat" description="ANK 4">
    <location>
        <begin position="132"/>
        <end position="161"/>
    </location>
</feature>
<feature type="repeat" description="ANK 5">
    <location>
        <begin position="165"/>
        <end position="194"/>
    </location>
</feature>
<feature type="repeat" description="ANK 6">
    <location>
        <begin position="198"/>
        <end position="227"/>
    </location>
</feature>
<feature type="region of interest" description="Disordered" evidence="2">
    <location>
        <begin position="302"/>
        <end position="343"/>
    </location>
</feature>
<feature type="region of interest" description="Disordered" evidence="2">
    <location>
        <begin position="355"/>
        <end position="401"/>
    </location>
</feature>
<feature type="coiled-coil region" evidence="1">
    <location>
        <begin position="431"/>
        <end position="480"/>
    </location>
</feature>
<feature type="coiled-coil region" evidence="1">
    <location>
        <begin position="565"/>
        <end position="724"/>
    </location>
</feature>
<feature type="coiled-coil region" evidence="1">
    <location>
        <begin position="776"/>
        <end position="805"/>
    </location>
</feature>
<feature type="compositionally biased region" description="Basic and acidic residues" evidence="2">
    <location>
        <begin position="372"/>
        <end position="382"/>
    </location>
</feature>
<feature type="splice variant" id="VSP_032809" description="In isoform 2." evidence="3">
    <location>
        <begin position="1"/>
        <end position="428"/>
    </location>
</feature>
<feature type="splice variant" id="VSP_032810" description="In isoform 2." evidence="3">
    <original>FPKKLKEEHDK</original>
    <variation>MNFKINVFICR</variation>
    <location>
        <begin position="429"/>
        <end position="439"/>
    </location>
</feature>
<feature type="sequence conflict" description="In Ref. 2; CAI56787." evidence="4" ref="2">
    <original>G</original>
    <variation>C</variation>
    <location>
        <position position="618"/>
    </location>
</feature>
<reference key="1">
    <citation type="journal article" date="2005" name="Nature">
        <title>Generation and annotation of the DNA sequences of human chromosomes 2 and 4.</title>
        <authorList>
            <person name="Hillier L.W."/>
            <person name="Graves T.A."/>
            <person name="Fulton R.S."/>
            <person name="Fulton L.A."/>
            <person name="Pepin K.H."/>
            <person name="Minx P."/>
            <person name="Wagner-McPherson C."/>
            <person name="Layman D."/>
            <person name="Wylie K."/>
            <person name="Sekhon M."/>
            <person name="Becker M.C."/>
            <person name="Fewell G.A."/>
            <person name="Delehaunty K.D."/>
            <person name="Miner T.L."/>
            <person name="Nash W.E."/>
            <person name="Kremitzki C."/>
            <person name="Oddy L."/>
            <person name="Du H."/>
            <person name="Sun H."/>
            <person name="Bradshaw-Cordum H."/>
            <person name="Ali J."/>
            <person name="Carter J."/>
            <person name="Cordes M."/>
            <person name="Harris A."/>
            <person name="Isak A."/>
            <person name="van Brunt A."/>
            <person name="Nguyen C."/>
            <person name="Du F."/>
            <person name="Courtney L."/>
            <person name="Kalicki J."/>
            <person name="Ozersky P."/>
            <person name="Abbott S."/>
            <person name="Armstrong J."/>
            <person name="Belter E.A."/>
            <person name="Caruso L."/>
            <person name="Cedroni M."/>
            <person name="Cotton M."/>
            <person name="Davidson T."/>
            <person name="Desai A."/>
            <person name="Elliott G."/>
            <person name="Erb T."/>
            <person name="Fronick C."/>
            <person name="Gaige T."/>
            <person name="Haakenson W."/>
            <person name="Haglund K."/>
            <person name="Holmes A."/>
            <person name="Harkins R."/>
            <person name="Kim K."/>
            <person name="Kruchowski S.S."/>
            <person name="Strong C.M."/>
            <person name="Grewal N."/>
            <person name="Goyea E."/>
            <person name="Hou S."/>
            <person name="Levy A."/>
            <person name="Martinka S."/>
            <person name="Mead K."/>
            <person name="McLellan M.D."/>
            <person name="Meyer R."/>
            <person name="Randall-Maher J."/>
            <person name="Tomlinson C."/>
            <person name="Dauphin-Kohlberg S."/>
            <person name="Kozlowicz-Reilly A."/>
            <person name="Shah N."/>
            <person name="Swearengen-Shahid S."/>
            <person name="Snider J."/>
            <person name="Strong J.T."/>
            <person name="Thompson J."/>
            <person name="Yoakum M."/>
            <person name="Leonard S."/>
            <person name="Pearman C."/>
            <person name="Trani L."/>
            <person name="Radionenko M."/>
            <person name="Waligorski J.E."/>
            <person name="Wang C."/>
            <person name="Rock S.M."/>
            <person name="Tin-Wollam A.-M."/>
            <person name="Maupin R."/>
            <person name="Latreille P."/>
            <person name="Wendl M.C."/>
            <person name="Yang S.-P."/>
            <person name="Pohl C."/>
            <person name="Wallis J.W."/>
            <person name="Spieth J."/>
            <person name="Bieri T.A."/>
            <person name="Berkowicz N."/>
            <person name="Nelson J.O."/>
            <person name="Osborne J."/>
            <person name="Ding L."/>
            <person name="Meyer R."/>
            <person name="Sabo A."/>
            <person name="Shotland Y."/>
            <person name="Sinha P."/>
            <person name="Wohldmann P.E."/>
            <person name="Cook L.L."/>
            <person name="Hickenbotham M.T."/>
            <person name="Eldred J."/>
            <person name="Williams D."/>
            <person name="Jones T.A."/>
            <person name="She X."/>
            <person name="Ciccarelli F.D."/>
            <person name="Izaurralde E."/>
            <person name="Taylor J."/>
            <person name="Schmutz J."/>
            <person name="Myers R.M."/>
            <person name="Cox D.R."/>
            <person name="Huang X."/>
            <person name="McPherson J.D."/>
            <person name="Mardis E.R."/>
            <person name="Clifton S.W."/>
            <person name="Warren W.C."/>
            <person name="Chinwalla A.T."/>
            <person name="Eddy S.R."/>
            <person name="Marra M.A."/>
            <person name="Ovcharenko I."/>
            <person name="Furey T.S."/>
            <person name="Miller W."/>
            <person name="Eichler E.E."/>
            <person name="Bork P."/>
            <person name="Suyama M."/>
            <person name="Torrents D."/>
            <person name="Waterston R.H."/>
            <person name="Wilson R.K."/>
        </authorList>
    </citation>
    <scope>NUCLEOTIDE SEQUENCE [LARGE SCALE GENOMIC DNA]</scope>
</reference>
<reference key="2">
    <citation type="journal article" date="2007" name="BMC Genomics">
        <title>The full-ORF clone resource of the German cDNA consortium.</title>
        <authorList>
            <person name="Bechtel S."/>
            <person name="Rosenfelder H."/>
            <person name="Duda A."/>
            <person name="Schmidt C.P."/>
            <person name="Ernst U."/>
            <person name="Wellenreuther R."/>
            <person name="Mehrle A."/>
            <person name="Schuster C."/>
            <person name="Bahr A."/>
            <person name="Bloecker H."/>
            <person name="Heubner D."/>
            <person name="Hoerlein A."/>
            <person name="Michel G."/>
            <person name="Wedler H."/>
            <person name="Koehrer K."/>
            <person name="Ottenwaelder B."/>
            <person name="Poustka A."/>
            <person name="Wiemann S."/>
            <person name="Schupp I."/>
        </authorList>
    </citation>
    <scope>NUCLEOTIDE SEQUENCE [LARGE SCALE MRNA] (ISOFORM 2)</scope>
    <source>
        <tissue>Testis</tissue>
    </source>
</reference>
<keyword id="KW-0025">Alternative splicing</keyword>
<keyword id="KW-0040">ANK repeat</keyword>
<keyword id="KW-0175">Coiled coil</keyword>
<keyword id="KW-1185">Reference proteome</keyword>
<keyword id="KW-0677">Repeat</keyword>
<sequence>MKLFGFGSRRGQTAEGSIDHVYTGSGYRIRDSELQKIHRAAVKGDAAEVERCLARRSGDLDARDKQHRTALHLACASGHVQVVTLLVNRKCQIDICDKENRTPLIQAVHCQEEACAVILLKHGANPNLKDIYGNTALHYAVYSESTSLAEKLLSHGAHIEALDKDSNTPLLFAIICKKEKMVEFLLKKKASTHAVDRLRRSALMLAVYYDSPGIVSILLKQNIDVFAQDMCGRDAEDYAISHHLTKIQQQILEHKQKILKKEKSDVGSSDESAVSIFHELRVDSLPASDDKDLSVATKQCVPEKVSEPLPGPSHEKGNRIVNGQGEGPPAKHPSLKPTTGVEDPAVKGAVQRKNVQTLRAEQALPVASEEEQERHERSEKKQPQVKKGNNTNKSEKIQLSENICDSTSSAAAGRLTQQRKIGKTYPQQFPKKLKEEHDKCTLKQENEEKTNVNMLYKKNREELERKEKQYKKEVEAKQLEPTVQSLEMKSKTARNTPNRDFHNHEETKGLMDENCILKADIAILRQEICTMKNDNLEKENKYLKDIKIVKETNAALEKYIKLNEEMITETAFRYQQELNDLKAENTRLNAELLKEKESKKRLEADIESYQSRLAAAIGKHSESVKTERNVKLALERTQDVSVQVEMSSAISKVKDENEFLTEQLSETQIKFNALKDKFRKTRDSLRKKSLALETVQNDLRKTQQQTQEMKEMYQNAEAKVNNSTGKWNCVEERICHLQRENAWLVQQLDDVHQKEDHKEIVTNIQRGFIESGKKDLVLEEKSKKLMNECDHLKESLFQYEREKAEGVVSIKEDKYFQTSRKKI</sequence>
<evidence type="ECO:0000255" key="1"/>
<evidence type="ECO:0000256" key="2">
    <source>
        <dbReference type="SAM" id="MobiDB-lite"/>
    </source>
</evidence>
<evidence type="ECO:0000303" key="3">
    <source>
    </source>
</evidence>
<evidence type="ECO:0000305" key="4"/>
<accession>Q5CZ79</accession>
<accession>A6NC18</accession>
<organism>
    <name type="scientific">Homo sapiens</name>
    <name type="common">Human</name>
    <dbReference type="NCBI Taxonomy" id="9606"/>
    <lineage>
        <taxon>Eukaryota</taxon>
        <taxon>Metazoa</taxon>
        <taxon>Chordata</taxon>
        <taxon>Craniata</taxon>
        <taxon>Vertebrata</taxon>
        <taxon>Euteleostomi</taxon>
        <taxon>Mammalia</taxon>
        <taxon>Eutheria</taxon>
        <taxon>Euarchontoglires</taxon>
        <taxon>Primates</taxon>
        <taxon>Haplorrhini</taxon>
        <taxon>Catarrhini</taxon>
        <taxon>Hominidae</taxon>
        <taxon>Homo</taxon>
    </lineage>
</organism>
<protein>
    <recommendedName>
        <fullName>Ankyrin repeat domain-containing protein 20B</fullName>
    </recommendedName>
    <alternativeName>
        <fullName>Ankyrin repeat domain-containing protein 20A pseudogene</fullName>
    </alternativeName>
</protein>